<accession>A9RAG7</accession>
<name>MBI3_DEBHA</name>
<reference key="1">
    <citation type="journal article" date="2008" name="FEMS Yeast Res.">
        <title>Promiscuous DNA in the nuclear genomes of hemiascomycetous yeasts.</title>
        <authorList>
            <person name="Sacerdot C."/>
            <person name="Casaregola S."/>
            <person name="Lafontaine I."/>
            <person name="Tekaia F."/>
            <person name="Dujon B."/>
            <person name="Ozier-Kalogeropoulos O."/>
        </authorList>
    </citation>
    <scope>NUCLEOTIDE SEQUENCE [LARGE SCALE GENOMIC DNA]</scope>
    <source>
        <strain>ATCC 36239 / CBS 767 / BCRC 21394 / JCM 1990 / NBRC 0083 / IGC 2968</strain>
    </source>
</reference>
<gene>
    <name type="primary">bI3</name>
</gene>
<proteinExistence type="inferred from homology"/>
<evidence type="ECO:0000250" key="1"/>
<evidence type="ECO:0000255" key="2">
    <source>
        <dbReference type="PROSITE-ProRule" id="PRU00968"/>
    </source>
</evidence>
<evidence type="ECO:0000305" key="3"/>
<protein>
    <recommendedName>
        <fullName>Cytochrome b mRNA maturase bI3</fullName>
    </recommendedName>
</protein>
<keyword id="KW-0472">Membrane</keyword>
<keyword id="KW-0496">Mitochondrion</keyword>
<keyword id="KW-0999">Mitochondrion inner membrane</keyword>
<keyword id="KW-0507">mRNA processing</keyword>
<keyword id="KW-0508">mRNA splicing</keyword>
<keyword id="KW-1185">Reference proteome</keyword>
<keyword id="KW-0694">RNA-binding</keyword>
<keyword id="KW-0812">Transmembrane</keyword>
<keyword id="KW-1133">Transmembrane helix</keyword>
<sequence>MTIRKSNPYLSLVNSYLMDSPQPSSMNYWWNVGSLLGLCLVMQMASGMFLAMHYSSSMELAFNSVEHMMRDVNAGWLMRYIHANGASFFFMCLYLHMGKALYYGSYKSPRVLVWSMGVMMFMLTMATAFMGYCLVYGQMSHWGATVITNLLSAMPFMGGDLVPLSIILSLYLLYISLKTFMKMIFNQSYMCPAKGWVKKVLDNTFCIKKYMHMYLSSRTSPXLYINTMSNMQHMKIMSTKSHTKDRDTSFLEKDIKNMDRNLLALMVGFMDGDGYIRMNKKSKDNMNYIYMSLIMNLNKNDLKLLQYFHQQLNMGKVYNMTPKKGNKLARWEMNKLDLFNKMEPLLEYHNMKFLTETRQKQYLLLKYIKHNKLVYYEDIINNNNYINEFIENNTLMDNFIKLDYFNNWLVGFTMAEGSFLIKKNKDICFQLKQKYNLELFNNMTLFFNTTRKLNINKNKYMQFNVSSKNDIQNMINFFSFSNNQPLLGNKLISYNKWLFTIKNSMRYKELKTPYMSWHQKEQ</sequence>
<comment type="function">
    <text evidence="1">Mitochondrial mRNA maturase required for splicing of intron 3 of the cytochrome b (COB) gene, containing its own coding sequence.</text>
</comment>
<comment type="subcellular location">
    <subcellularLocation>
        <location evidence="3">Mitochondrion inner membrane</location>
        <topology evidence="3">Multi-pass membrane protein</topology>
    </subcellularLocation>
</comment>
<comment type="miscellaneous">
    <text>Encoded from partially processed COB mRNA that terminates with the in-frame coding sequence of the third intron.</text>
</comment>
<comment type="similarity">
    <text evidence="3">In the N-terminal section; belongs to the cytochrome b family.</text>
</comment>
<comment type="similarity">
    <text evidence="3">In the C-terminal section; belongs to the LAGLIDADG endonuclease family.</text>
</comment>
<geneLocation type="mitochondrion"/>
<organism>
    <name type="scientific">Debaryomyces hansenii (strain ATCC 36239 / CBS 767 / BCRC 21394 / JCM 1990 / NBRC 0083 / IGC 2968)</name>
    <name type="common">Yeast</name>
    <name type="synonym">Torulaspora hansenii</name>
    <dbReference type="NCBI Taxonomy" id="284592"/>
    <lineage>
        <taxon>Eukaryota</taxon>
        <taxon>Fungi</taxon>
        <taxon>Dikarya</taxon>
        <taxon>Ascomycota</taxon>
        <taxon>Saccharomycotina</taxon>
        <taxon>Pichiomycetes</taxon>
        <taxon>Debaryomycetaceae</taxon>
        <taxon>Debaryomyces</taxon>
    </lineage>
</organism>
<dbReference type="EMBL" id="DQ508940">
    <property type="protein sequence ID" value="ABF58068.1"/>
    <property type="molecule type" value="Genomic_DNA"/>
</dbReference>
<dbReference type="FunCoup" id="A9RAG7">
    <property type="interactions" value="81"/>
</dbReference>
<dbReference type="STRING" id="284592.A9RAG7"/>
<dbReference type="InParanoid" id="A9RAG7"/>
<dbReference type="Proteomes" id="UP000000599">
    <property type="component" value="Mitochondrion"/>
</dbReference>
<dbReference type="GO" id="GO:0005743">
    <property type="term" value="C:mitochondrial inner membrane"/>
    <property type="evidence" value="ECO:0007669"/>
    <property type="project" value="UniProtKB-SubCell"/>
</dbReference>
<dbReference type="GO" id="GO:0004519">
    <property type="term" value="F:endonuclease activity"/>
    <property type="evidence" value="ECO:0007669"/>
    <property type="project" value="InterPro"/>
</dbReference>
<dbReference type="GO" id="GO:0003723">
    <property type="term" value="F:RNA binding"/>
    <property type="evidence" value="ECO:0007669"/>
    <property type="project" value="UniProtKB-KW"/>
</dbReference>
<dbReference type="GO" id="GO:0008121">
    <property type="term" value="F:ubiquinol-cytochrome-c reductase activity"/>
    <property type="evidence" value="ECO:0007669"/>
    <property type="project" value="TreeGrafter"/>
</dbReference>
<dbReference type="GO" id="GO:0006122">
    <property type="term" value="P:mitochondrial electron transport, ubiquinol to cytochrome c"/>
    <property type="evidence" value="ECO:0007669"/>
    <property type="project" value="TreeGrafter"/>
</dbReference>
<dbReference type="GO" id="GO:0006397">
    <property type="term" value="P:mRNA processing"/>
    <property type="evidence" value="ECO:0007669"/>
    <property type="project" value="UniProtKB-KW"/>
</dbReference>
<dbReference type="GO" id="GO:0008380">
    <property type="term" value="P:RNA splicing"/>
    <property type="evidence" value="ECO:0007669"/>
    <property type="project" value="UniProtKB-KW"/>
</dbReference>
<dbReference type="CDD" id="cd00284">
    <property type="entry name" value="Cytochrome_b_N"/>
    <property type="match status" value="1"/>
</dbReference>
<dbReference type="Gene3D" id="1.20.810.10">
    <property type="entry name" value="Cytochrome Bc1 Complex, Chain C"/>
    <property type="match status" value="1"/>
</dbReference>
<dbReference type="Gene3D" id="3.10.28.10">
    <property type="entry name" value="Homing endonucleases"/>
    <property type="match status" value="2"/>
</dbReference>
<dbReference type="InterPro" id="IPR005797">
    <property type="entry name" value="Cyt_b/b6_N"/>
</dbReference>
<dbReference type="InterPro" id="IPR027387">
    <property type="entry name" value="Cytb/b6-like_sf"/>
</dbReference>
<dbReference type="InterPro" id="IPR048259">
    <property type="entry name" value="Cytochrome_b_N_euk/bac"/>
</dbReference>
<dbReference type="InterPro" id="IPR016174">
    <property type="entry name" value="Di-haem_cyt_TM"/>
</dbReference>
<dbReference type="InterPro" id="IPR027434">
    <property type="entry name" value="Homing_endonucl"/>
</dbReference>
<dbReference type="InterPro" id="IPR004860">
    <property type="entry name" value="LAGLIDADG_dom"/>
</dbReference>
<dbReference type="PANTHER" id="PTHR19271">
    <property type="entry name" value="CYTOCHROME B"/>
    <property type="match status" value="1"/>
</dbReference>
<dbReference type="PANTHER" id="PTHR19271:SF16">
    <property type="entry name" value="CYTOCHROME B"/>
    <property type="match status" value="1"/>
</dbReference>
<dbReference type="Pfam" id="PF00033">
    <property type="entry name" value="Cytochrome_B"/>
    <property type="match status" value="1"/>
</dbReference>
<dbReference type="Pfam" id="PF00961">
    <property type="entry name" value="LAGLIDADG_1"/>
    <property type="match status" value="2"/>
</dbReference>
<dbReference type="SUPFAM" id="SSF55608">
    <property type="entry name" value="Homing endonucleases"/>
    <property type="match status" value="2"/>
</dbReference>
<dbReference type="SUPFAM" id="SSF81342">
    <property type="entry name" value="Transmembrane di-heme cytochromes"/>
    <property type="match status" value="1"/>
</dbReference>
<dbReference type="PROSITE" id="PS51002">
    <property type="entry name" value="CYTB_NTER"/>
    <property type="match status" value="1"/>
</dbReference>
<feature type="chain" id="PRO_0000355042" description="Cytochrome b mRNA maturase bI3">
    <location>
        <begin position="1"/>
        <end position="522"/>
    </location>
</feature>
<feature type="topological domain" description="Mitochondrial matrix" evidence="1">
    <location>
        <begin position="1"/>
        <end position="31"/>
    </location>
</feature>
<feature type="transmembrane region" description="Helical" evidence="2">
    <location>
        <begin position="32"/>
        <end position="52"/>
    </location>
</feature>
<feature type="topological domain" description="Mitochondrial intermembrane" evidence="1">
    <location>
        <begin position="53"/>
        <end position="84"/>
    </location>
</feature>
<feature type="transmembrane region" description="Helical" evidence="2">
    <location>
        <begin position="85"/>
        <end position="105"/>
    </location>
</feature>
<feature type="topological domain" description="Mitochondrial matrix" evidence="1">
    <location>
        <begin position="106"/>
        <end position="110"/>
    </location>
</feature>
<feature type="transmembrane region" description="Helical" evidence="2">
    <location>
        <begin position="111"/>
        <end position="131"/>
    </location>
</feature>
<feature type="topological domain" description="Mitochondrial intermembrane" evidence="1">
    <location>
        <begin position="132"/>
        <end position="154"/>
    </location>
</feature>
<feature type="transmembrane region" description="Helical" evidence="2">
    <location>
        <begin position="155"/>
        <end position="175"/>
    </location>
</feature>
<feature type="topological domain" description="Mitochondrial matrix" evidence="1">
    <location>
        <begin position="176"/>
        <end position="522"/>
    </location>
</feature>
<feature type="region of interest" description="Cytochrome b">
    <location>
        <begin position="1"/>
        <end position="163"/>
    </location>
</feature>
<feature type="region of interest" description="Maturase">
    <location>
        <begin position="164"/>
        <end position="522"/>
    </location>
</feature>